<sequence>MAVGKNKRVSKGKKGAKKKVIDPFSRKEWYNLKAPVTFNVRNFGQTLVTKTIGTKLATDGLKGRVFEMSLADLNADEDQAYRKIKLSCEDVQGRNCLTDFHGTSVTRDKLCSLIRKNYSLIEAFADVKTLDGYNLRMFCVGYTKRRPGQLKSTCYVRSSKVRLIHKKMVAVMTNEASNSTLKELVKKVIPESIGKEIEKACKSIFPLQNVLVRKIKVLKKPKFDLTKLMESHNYSGEEEGHTLKVKESENATNLLTAELQSS</sequence>
<keyword id="KW-0963">Cytoplasm</keyword>
<keyword id="KW-1185">Reference proteome</keyword>
<keyword id="KW-0687">Ribonucleoprotein</keyword>
<keyword id="KW-0689">Ribosomal protein</keyword>
<dbReference type="EMBL" id="CR940352">
    <property type="protein sequence ID" value="CAI75915.1"/>
    <property type="molecule type" value="Genomic_DNA"/>
</dbReference>
<dbReference type="RefSeq" id="XP_955391.1">
    <property type="nucleotide sequence ID" value="XM_950298.1"/>
</dbReference>
<dbReference type="SMR" id="Q4UB86"/>
<dbReference type="FunCoup" id="Q4UB86">
    <property type="interactions" value="357"/>
</dbReference>
<dbReference type="STRING" id="5874.Q4UB86"/>
<dbReference type="GeneID" id="3865183"/>
<dbReference type="KEGG" id="tan:TA17795"/>
<dbReference type="VEuPathDB" id="PiroplasmaDB:TA17795"/>
<dbReference type="eggNOG" id="KOG1628">
    <property type="taxonomic scope" value="Eukaryota"/>
</dbReference>
<dbReference type="InParanoid" id="Q4UB86"/>
<dbReference type="OMA" id="TRFKGHE"/>
<dbReference type="OrthoDB" id="9834376at2759"/>
<dbReference type="Proteomes" id="UP000001950">
    <property type="component" value="Chromosome 3"/>
</dbReference>
<dbReference type="GO" id="GO:0022627">
    <property type="term" value="C:cytosolic small ribosomal subunit"/>
    <property type="evidence" value="ECO:0007669"/>
    <property type="project" value="UniProtKB-UniRule"/>
</dbReference>
<dbReference type="GO" id="GO:0003735">
    <property type="term" value="F:structural constituent of ribosome"/>
    <property type="evidence" value="ECO:0007669"/>
    <property type="project" value="UniProtKB-UniRule"/>
</dbReference>
<dbReference type="GO" id="GO:0006412">
    <property type="term" value="P:translation"/>
    <property type="evidence" value="ECO:0007669"/>
    <property type="project" value="UniProtKB-UniRule"/>
</dbReference>
<dbReference type="HAMAP" id="MF_03122">
    <property type="entry name" value="Ribosomal_eS1_euk"/>
    <property type="match status" value="1"/>
</dbReference>
<dbReference type="InterPro" id="IPR001593">
    <property type="entry name" value="Ribosomal_eS1"/>
</dbReference>
<dbReference type="InterPro" id="IPR018281">
    <property type="entry name" value="Ribosomal_eS1_CS"/>
</dbReference>
<dbReference type="InterPro" id="IPR027500">
    <property type="entry name" value="Ribosomal_eS1_euk"/>
</dbReference>
<dbReference type="PANTHER" id="PTHR11830">
    <property type="entry name" value="40S RIBOSOMAL PROTEIN S3A"/>
    <property type="match status" value="1"/>
</dbReference>
<dbReference type="Pfam" id="PF01015">
    <property type="entry name" value="Ribosomal_S3Ae"/>
    <property type="match status" value="1"/>
</dbReference>
<dbReference type="SMART" id="SM01397">
    <property type="entry name" value="Ribosomal_S3Ae"/>
    <property type="match status" value="1"/>
</dbReference>
<dbReference type="PROSITE" id="PS01191">
    <property type="entry name" value="RIBOSOMAL_S3AE"/>
    <property type="match status" value="1"/>
</dbReference>
<protein>
    <recommendedName>
        <fullName evidence="1">Small ribosomal subunit protein eS1</fullName>
    </recommendedName>
    <alternativeName>
        <fullName evidence="2">40S ribosomal protein S3a</fullName>
    </alternativeName>
</protein>
<evidence type="ECO:0000255" key="1">
    <source>
        <dbReference type="HAMAP-Rule" id="MF_03122"/>
    </source>
</evidence>
<evidence type="ECO:0000305" key="2"/>
<proteinExistence type="inferred from homology"/>
<feature type="initiator methionine" description="Removed" evidence="1">
    <location>
        <position position="1"/>
    </location>
</feature>
<feature type="chain" id="PRO_0000389341" description="Small ribosomal subunit protein eS1">
    <location>
        <begin position="2"/>
        <end position="262"/>
    </location>
</feature>
<comment type="subunit">
    <text evidence="1">Component of the small ribosomal subunit. Mature ribosomes consist of a small (40S) and a large (60S) subunit. The 40S subunit contains about 33 different proteins and 1 molecule of RNA (18S). The 60S subunit contains about 49 different proteins and 3 molecules of RNA (25S, 5.8S and 5S).</text>
</comment>
<comment type="subcellular location">
    <subcellularLocation>
        <location evidence="1">Cytoplasm</location>
    </subcellularLocation>
</comment>
<comment type="similarity">
    <text evidence="1">Belongs to the eukaryotic ribosomal protein eS1 family.</text>
</comment>
<name>RS3A_THEAN</name>
<organism>
    <name type="scientific">Theileria annulata</name>
    <dbReference type="NCBI Taxonomy" id="5874"/>
    <lineage>
        <taxon>Eukaryota</taxon>
        <taxon>Sar</taxon>
        <taxon>Alveolata</taxon>
        <taxon>Apicomplexa</taxon>
        <taxon>Aconoidasida</taxon>
        <taxon>Piroplasmida</taxon>
        <taxon>Theileriidae</taxon>
        <taxon>Theileria</taxon>
    </lineage>
</organism>
<accession>Q4UB86</accession>
<gene>
    <name type="ORF">TA17795</name>
</gene>
<reference key="1">
    <citation type="journal article" date="2005" name="Science">
        <title>Genome of the host-cell transforming parasite Theileria annulata compared with T. parva.</title>
        <authorList>
            <person name="Pain A."/>
            <person name="Renauld H."/>
            <person name="Berriman M."/>
            <person name="Murphy L."/>
            <person name="Yeats C.A."/>
            <person name="Weir W."/>
            <person name="Kerhornou A."/>
            <person name="Aslett M."/>
            <person name="Bishop R."/>
            <person name="Bouchier C."/>
            <person name="Cochet M."/>
            <person name="Coulson R.M.R."/>
            <person name="Cronin A."/>
            <person name="de Villiers E.P."/>
            <person name="Fraser A."/>
            <person name="Fosker N."/>
            <person name="Gardner M."/>
            <person name="Goble A."/>
            <person name="Griffiths-Jones S."/>
            <person name="Harris D.E."/>
            <person name="Katzer F."/>
            <person name="Larke N."/>
            <person name="Lord A."/>
            <person name="Maser P."/>
            <person name="McKellar S."/>
            <person name="Mooney P."/>
            <person name="Morton F."/>
            <person name="Nene V."/>
            <person name="O'Neil S."/>
            <person name="Price C."/>
            <person name="Quail M.A."/>
            <person name="Rabbinowitsch E."/>
            <person name="Rawlings N.D."/>
            <person name="Rutter S."/>
            <person name="Saunders D."/>
            <person name="Seeger K."/>
            <person name="Shah T."/>
            <person name="Squares R."/>
            <person name="Squares S."/>
            <person name="Tivey A."/>
            <person name="Walker A.R."/>
            <person name="Woodward J."/>
            <person name="Dobbelaere D.A.E."/>
            <person name="Langsley G."/>
            <person name="Rajandream M.A."/>
            <person name="McKeever D."/>
            <person name="Shiels B."/>
            <person name="Tait A."/>
            <person name="Barrell B.G."/>
            <person name="Hall N."/>
        </authorList>
    </citation>
    <scope>NUCLEOTIDE SEQUENCE [LARGE SCALE GENOMIC DNA]</scope>
    <source>
        <strain>Ankara</strain>
    </source>
</reference>